<evidence type="ECO:0000255" key="1">
    <source>
        <dbReference type="HAMAP-Rule" id="MF_00175"/>
    </source>
</evidence>
<evidence type="ECO:0000255" key="2">
    <source>
        <dbReference type="PROSITE-ProRule" id="PRU01250"/>
    </source>
</evidence>
<feature type="chain" id="PRO_1000024538" description="ATP-dependent Clp protease ATP-binding subunit ClpX">
    <location>
        <begin position="1"/>
        <end position="421"/>
    </location>
</feature>
<feature type="domain" description="ClpX-type ZB" evidence="2">
    <location>
        <begin position="1"/>
        <end position="50"/>
    </location>
</feature>
<feature type="binding site" evidence="2">
    <location>
        <position position="9"/>
    </location>
    <ligand>
        <name>Zn(2+)</name>
        <dbReference type="ChEBI" id="CHEBI:29105"/>
    </ligand>
</feature>
<feature type="binding site" evidence="2">
    <location>
        <position position="12"/>
    </location>
    <ligand>
        <name>Zn(2+)</name>
        <dbReference type="ChEBI" id="CHEBI:29105"/>
    </ligand>
</feature>
<feature type="binding site" evidence="2">
    <location>
        <position position="31"/>
    </location>
    <ligand>
        <name>Zn(2+)</name>
        <dbReference type="ChEBI" id="CHEBI:29105"/>
    </ligand>
</feature>
<feature type="binding site" evidence="2">
    <location>
        <position position="34"/>
    </location>
    <ligand>
        <name>Zn(2+)</name>
        <dbReference type="ChEBI" id="CHEBI:29105"/>
    </ligand>
</feature>
<feature type="binding site" evidence="1">
    <location>
        <begin position="123"/>
        <end position="130"/>
    </location>
    <ligand>
        <name>ATP</name>
        <dbReference type="ChEBI" id="CHEBI:30616"/>
    </ligand>
</feature>
<name>CLPX_CHLAB</name>
<sequence>MNKKNLTICSFCGRSEKDVEKLIAGPSVYICDYCIKLCSGILDKKPTSTSSSGASTETAPQHPDLQVLTPKEIKKHIDKYVVGQERAKKTIAVAVYNHYKRIRALLNNKHVSYGKSNVLLLGPTGSGKTLIAKTLAKILDVPFTIADATTLTEAGYVGEDVENIVLRLLQAADYDVARAERGIIYIDEIDKIGRTTANVSITRDVSGEGVQQALLKIIEGTTANVPPKGGRKHPNQEYIRVNTENILFIVGGAFVNLDKIIAKRLGKTTIGFSDDLGDFSQKDRDHLLTKVETEDLIAFGMIPEFVGRFNCIVNCEELSLDELVAILTEPTNAIVKQYIELFSEENVKLIFEKEALYAIAKKAKLAKTGARALGMILENLLRDLMFEIPSDPTVEAIRIQEDTILENKAPVIIRRAPEAIA</sequence>
<protein>
    <recommendedName>
        <fullName evidence="1">ATP-dependent Clp protease ATP-binding subunit ClpX</fullName>
    </recommendedName>
</protein>
<dbReference type="EMBL" id="CR848038">
    <property type="protein sequence ID" value="CAH64329.1"/>
    <property type="molecule type" value="Genomic_DNA"/>
</dbReference>
<dbReference type="RefSeq" id="WP_006343579.1">
    <property type="nucleotide sequence ID" value="NC_004552.2"/>
</dbReference>
<dbReference type="SMR" id="Q5L4W6"/>
<dbReference type="GeneID" id="93024446"/>
<dbReference type="KEGG" id="cab:CAB889"/>
<dbReference type="eggNOG" id="COG1219">
    <property type="taxonomic scope" value="Bacteria"/>
</dbReference>
<dbReference type="HOGENOM" id="CLU_014218_8_2_0"/>
<dbReference type="OrthoDB" id="9804062at2"/>
<dbReference type="Proteomes" id="UP000001012">
    <property type="component" value="Chromosome"/>
</dbReference>
<dbReference type="GO" id="GO:0009376">
    <property type="term" value="C:HslUV protease complex"/>
    <property type="evidence" value="ECO:0007669"/>
    <property type="project" value="TreeGrafter"/>
</dbReference>
<dbReference type="GO" id="GO:0005524">
    <property type="term" value="F:ATP binding"/>
    <property type="evidence" value="ECO:0007669"/>
    <property type="project" value="UniProtKB-UniRule"/>
</dbReference>
<dbReference type="GO" id="GO:0016887">
    <property type="term" value="F:ATP hydrolysis activity"/>
    <property type="evidence" value="ECO:0007669"/>
    <property type="project" value="InterPro"/>
</dbReference>
<dbReference type="GO" id="GO:0140662">
    <property type="term" value="F:ATP-dependent protein folding chaperone"/>
    <property type="evidence" value="ECO:0007669"/>
    <property type="project" value="InterPro"/>
</dbReference>
<dbReference type="GO" id="GO:0046983">
    <property type="term" value="F:protein dimerization activity"/>
    <property type="evidence" value="ECO:0007669"/>
    <property type="project" value="InterPro"/>
</dbReference>
<dbReference type="GO" id="GO:0051082">
    <property type="term" value="F:unfolded protein binding"/>
    <property type="evidence" value="ECO:0007669"/>
    <property type="project" value="UniProtKB-UniRule"/>
</dbReference>
<dbReference type="GO" id="GO:0008270">
    <property type="term" value="F:zinc ion binding"/>
    <property type="evidence" value="ECO:0007669"/>
    <property type="project" value="InterPro"/>
</dbReference>
<dbReference type="GO" id="GO:0051301">
    <property type="term" value="P:cell division"/>
    <property type="evidence" value="ECO:0007669"/>
    <property type="project" value="TreeGrafter"/>
</dbReference>
<dbReference type="GO" id="GO:0051603">
    <property type="term" value="P:proteolysis involved in protein catabolic process"/>
    <property type="evidence" value="ECO:0007669"/>
    <property type="project" value="TreeGrafter"/>
</dbReference>
<dbReference type="CDD" id="cd19497">
    <property type="entry name" value="RecA-like_ClpX"/>
    <property type="match status" value="1"/>
</dbReference>
<dbReference type="FunFam" id="1.10.8.60:FF:000002">
    <property type="entry name" value="ATP-dependent Clp protease ATP-binding subunit ClpX"/>
    <property type="match status" value="1"/>
</dbReference>
<dbReference type="FunFam" id="3.40.50.300:FF:000005">
    <property type="entry name" value="ATP-dependent Clp protease ATP-binding subunit ClpX"/>
    <property type="match status" value="1"/>
</dbReference>
<dbReference type="Gene3D" id="1.10.8.60">
    <property type="match status" value="1"/>
</dbReference>
<dbReference type="Gene3D" id="6.20.220.10">
    <property type="entry name" value="ClpX chaperone, C4-type zinc finger domain"/>
    <property type="match status" value="1"/>
</dbReference>
<dbReference type="Gene3D" id="3.40.50.300">
    <property type="entry name" value="P-loop containing nucleotide triphosphate hydrolases"/>
    <property type="match status" value="1"/>
</dbReference>
<dbReference type="HAMAP" id="MF_00175">
    <property type="entry name" value="ClpX"/>
    <property type="match status" value="1"/>
</dbReference>
<dbReference type="InterPro" id="IPR003593">
    <property type="entry name" value="AAA+_ATPase"/>
</dbReference>
<dbReference type="InterPro" id="IPR050052">
    <property type="entry name" value="ATP-dep_Clp_protease_ClpX"/>
</dbReference>
<dbReference type="InterPro" id="IPR003959">
    <property type="entry name" value="ATPase_AAA_core"/>
</dbReference>
<dbReference type="InterPro" id="IPR019489">
    <property type="entry name" value="Clp_ATPase_C"/>
</dbReference>
<dbReference type="InterPro" id="IPR004487">
    <property type="entry name" value="Clp_protease_ATP-bd_su_ClpX"/>
</dbReference>
<dbReference type="InterPro" id="IPR046425">
    <property type="entry name" value="ClpX_bact"/>
</dbReference>
<dbReference type="InterPro" id="IPR027417">
    <property type="entry name" value="P-loop_NTPase"/>
</dbReference>
<dbReference type="InterPro" id="IPR010603">
    <property type="entry name" value="Znf_CppX_C4"/>
</dbReference>
<dbReference type="InterPro" id="IPR038366">
    <property type="entry name" value="Znf_CppX_C4_sf"/>
</dbReference>
<dbReference type="NCBIfam" id="TIGR00382">
    <property type="entry name" value="clpX"/>
    <property type="match status" value="1"/>
</dbReference>
<dbReference type="NCBIfam" id="NF003745">
    <property type="entry name" value="PRK05342.1"/>
    <property type="match status" value="1"/>
</dbReference>
<dbReference type="PANTHER" id="PTHR48102:SF7">
    <property type="entry name" value="ATP-DEPENDENT CLP PROTEASE ATP-BINDING SUBUNIT CLPX-LIKE, MITOCHONDRIAL"/>
    <property type="match status" value="1"/>
</dbReference>
<dbReference type="PANTHER" id="PTHR48102">
    <property type="entry name" value="ATP-DEPENDENT CLP PROTEASE ATP-BINDING SUBUNIT CLPX-LIKE, MITOCHONDRIAL-RELATED"/>
    <property type="match status" value="1"/>
</dbReference>
<dbReference type="Pfam" id="PF07724">
    <property type="entry name" value="AAA_2"/>
    <property type="match status" value="1"/>
</dbReference>
<dbReference type="Pfam" id="PF10431">
    <property type="entry name" value="ClpB_D2-small"/>
    <property type="match status" value="1"/>
</dbReference>
<dbReference type="Pfam" id="PF06689">
    <property type="entry name" value="zf-C4_ClpX"/>
    <property type="match status" value="1"/>
</dbReference>
<dbReference type="SMART" id="SM00382">
    <property type="entry name" value="AAA"/>
    <property type="match status" value="1"/>
</dbReference>
<dbReference type="SMART" id="SM01086">
    <property type="entry name" value="ClpB_D2-small"/>
    <property type="match status" value="1"/>
</dbReference>
<dbReference type="SMART" id="SM00994">
    <property type="entry name" value="zf-C4_ClpX"/>
    <property type="match status" value="1"/>
</dbReference>
<dbReference type="SUPFAM" id="SSF57716">
    <property type="entry name" value="Glucocorticoid receptor-like (DNA-binding domain)"/>
    <property type="match status" value="1"/>
</dbReference>
<dbReference type="SUPFAM" id="SSF52540">
    <property type="entry name" value="P-loop containing nucleoside triphosphate hydrolases"/>
    <property type="match status" value="1"/>
</dbReference>
<dbReference type="PROSITE" id="PS51902">
    <property type="entry name" value="CLPX_ZB"/>
    <property type="match status" value="1"/>
</dbReference>
<keyword id="KW-0067">ATP-binding</keyword>
<keyword id="KW-0143">Chaperone</keyword>
<keyword id="KW-0479">Metal-binding</keyword>
<keyword id="KW-0547">Nucleotide-binding</keyword>
<keyword id="KW-0862">Zinc</keyword>
<reference key="1">
    <citation type="journal article" date="2005" name="Genome Res.">
        <title>The Chlamydophila abortus genome sequence reveals an array of variable proteins that contribute to interspecies variation.</title>
        <authorList>
            <person name="Thomson N.R."/>
            <person name="Yeats C."/>
            <person name="Bell K."/>
            <person name="Holden M.T.G."/>
            <person name="Bentley S.D."/>
            <person name="Livingstone M."/>
            <person name="Cerdeno-Tarraga A.-M."/>
            <person name="Harris B."/>
            <person name="Doggett J."/>
            <person name="Ormond D."/>
            <person name="Mungall K."/>
            <person name="Clarke K."/>
            <person name="Feltwell T."/>
            <person name="Hance Z."/>
            <person name="Sanders M."/>
            <person name="Quail M.A."/>
            <person name="Price C."/>
            <person name="Barrell B.G."/>
            <person name="Parkhill J."/>
            <person name="Longbottom D."/>
        </authorList>
    </citation>
    <scope>NUCLEOTIDE SEQUENCE [LARGE SCALE GENOMIC DNA]</scope>
    <source>
        <strain>DSM 27085 / S26/3</strain>
    </source>
</reference>
<organism>
    <name type="scientific">Chlamydia abortus (strain DSM 27085 / S26/3)</name>
    <name type="common">Chlamydophila abortus</name>
    <dbReference type="NCBI Taxonomy" id="218497"/>
    <lineage>
        <taxon>Bacteria</taxon>
        <taxon>Pseudomonadati</taxon>
        <taxon>Chlamydiota</taxon>
        <taxon>Chlamydiia</taxon>
        <taxon>Chlamydiales</taxon>
        <taxon>Chlamydiaceae</taxon>
        <taxon>Chlamydia/Chlamydophila group</taxon>
        <taxon>Chlamydia</taxon>
    </lineage>
</organism>
<comment type="function">
    <text evidence="1">ATP-dependent specificity component of the Clp protease. It directs the protease to specific substrates. Can perform chaperone functions in the absence of ClpP.</text>
</comment>
<comment type="subunit">
    <text evidence="1">Component of the ClpX-ClpP complex. Forms a hexameric ring that, in the presence of ATP, binds to fourteen ClpP subunits assembled into a disk-like structure with a central cavity, resembling the structure of eukaryotic proteasomes.</text>
</comment>
<comment type="similarity">
    <text evidence="1">Belongs to the ClpX chaperone family.</text>
</comment>
<accession>Q5L4W6</accession>
<gene>
    <name evidence="1" type="primary">clpX</name>
    <name type="ordered locus">CAB889</name>
</gene>
<proteinExistence type="inferred from homology"/>